<dbReference type="EMBL" id="AE000782">
    <property type="protein sequence ID" value="AAB90730.1"/>
    <property type="molecule type" value="Genomic_DNA"/>
</dbReference>
<dbReference type="PIR" id="C69315">
    <property type="entry name" value="C69315"/>
</dbReference>
<dbReference type="RefSeq" id="WP_010878030.1">
    <property type="nucleotide sequence ID" value="NC_000917.1"/>
</dbReference>
<dbReference type="STRING" id="224325.AF_0523"/>
<dbReference type="PaxDb" id="224325-AF_0523"/>
<dbReference type="EnsemblBacteria" id="AAB90730">
    <property type="protein sequence ID" value="AAB90730"/>
    <property type="gene ID" value="AF_0523"/>
</dbReference>
<dbReference type="KEGG" id="afu:AF_0523"/>
<dbReference type="eggNOG" id="arCOG10171">
    <property type="taxonomic scope" value="Archaea"/>
</dbReference>
<dbReference type="HOGENOM" id="CLU_1736318_0_0_2"/>
<dbReference type="OrthoDB" id="71242at2157"/>
<dbReference type="Proteomes" id="UP000002199">
    <property type="component" value="Chromosome"/>
</dbReference>
<dbReference type="GO" id="GO:0005886">
    <property type="term" value="C:plasma membrane"/>
    <property type="evidence" value="ECO:0007669"/>
    <property type="project" value="UniProtKB-SubCell"/>
</dbReference>
<comment type="subcellular location">
    <subcellularLocation>
        <location evidence="2">Cell membrane</location>
        <topology evidence="2">Multi-pass membrane protein</topology>
    </subcellularLocation>
</comment>
<keyword id="KW-1003">Cell membrane</keyword>
<keyword id="KW-0472">Membrane</keyword>
<keyword id="KW-1185">Reference proteome</keyword>
<keyword id="KW-0812">Transmembrane</keyword>
<keyword id="KW-1133">Transmembrane helix</keyword>
<accession>O29727</accession>
<reference key="1">
    <citation type="journal article" date="1997" name="Nature">
        <title>The complete genome sequence of the hyperthermophilic, sulphate-reducing archaeon Archaeoglobus fulgidus.</title>
        <authorList>
            <person name="Klenk H.-P."/>
            <person name="Clayton R.A."/>
            <person name="Tomb J.-F."/>
            <person name="White O."/>
            <person name="Nelson K.E."/>
            <person name="Ketchum K.A."/>
            <person name="Dodson R.J."/>
            <person name="Gwinn M.L."/>
            <person name="Hickey E.K."/>
            <person name="Peterson J.D."/>
            <person name="Richardson D.L."/>
            <person name="Kerlavage A.R."/>
            <person name="Graham D.E."/>
            <person name="Kyrpides N.C."/>
            <person name="Fleischmann R.D."/>
            <person name="Quackenbush J."/>
            <person name="Lee N.H."/>
            <person name="Sutton G.G."/>
            <person name="Gill S.R."/>
            <person name="Kirkness E.F."/>
            <person name="Dougherty B.A."/>
            <person name="McKenney K."/>
            <person name="Adams M.D."/>
            <person name="Loftus B.J."/>
            <person name="Peterson S.N."/>
            <person name="Reich C.I."/>
            <person name="McNeil L.K."/>
            <person name="Badger J.H."/>
            <person name="Glodek A."/>
            <person name="Zhou L."/>
            <person name="Overbeek R."/>
            <person name="Gocayne J.D."/>
            <person name="Weidman J.F."/>
            <person name="McDonald L.A."/>
            <person name="Utterback T.R."/>
            <person name="Cotton M.D."/>
            <person name="Spriggs T."/>
            <person name="Artiach P."/>
            <person name="Kaine B.P."/>
            <person name="Sykes S.M."/>
            <person name="Sadow P.W."/>
            <person name="D'Andrea K.P."/>
            <person name="Bowman C."/>
            <person name="Fujii C."/>
            <person name="Garland S.A."/>
            <person name="Mason T.M."/>
            <person name="Olsen G.J."/>
            <person name="Fraser C.M."/>
            <person name="Smith H.O."/>
            <person name="Woese C.R."/>
            <person name="Venter J.C."/>
        </authorList>
    </citation>
    <scope>NUCLEOTIDE SEQUENCE [LARGE SCALE GENOMIC DNA]</scope>
    <source>
        <strain>ATCC 49558 / DSM 4304 / JCM 9628 / NBRC 100126 / VC-16</strain>
    </source>
</reference>
<sequence>MSDNAKTSATDIVQRIISLLTIILLAYFLFKEGLFSVDQRLLSLATIVLLASFLFIIFLVLFKWPLGNLNKKEIRRTIAIVTTSFYFGTLSMVLSGKLELTEEVGALIDGLKWAFMVVVAFYFGSRAVEDALKSKKSAEECPQNTDAEAG</sequence>
<gene>
    <name type="ordered locus">AF_0523</name>
</gene>
<organism>
    <name type="scientific">Archaeoglobus fulgidus (strain ATCC 49558 / DSM 4304 / JCM 9628 / NBRC 100126 / VC-16)</name>
    <dbReference type="NCBI Taxonomy" id="224325"/>
    <lineage>
        <taxon>Archaea</taxon>
        <taxon>Methanobacteriati</taxon>
        <taxon>Methanobacteriota</taxon>
        <taxon>Archaeoglobi</taxon>
        <taxon>Archaeoglobales</taxon>
        <taxon>Archaeoglobaceae</taxon>
        <taxon>Archaeoglobus</taxon>
    </lineage>
</organism>
<protein>
    <recommendedName>
        <fullName>Uncharacterized protein AF_0523</fullName>
    </recommendedName>
</protein>
<proteinExistence type="predicted"/>
<feature type="chain" id="PRO_0000127886" description="Uncharacterized protein AF_0523">
    <location>
        <begin position="1"/>
        <end position="150"/>
    </location>
</feature>
<feature type="transmembrane region" description="Helical" evidence="1">
    <location>
        <begin position="12"/>
        <end position="30"/>
    </location>
</feature>
<feature type="transmembrane region" description="Helical" evidence="1">
    <location>
        <begin position="40"/>
        <end position="62"/>
    </location>
</feature>
<feature type="transmembrane region" description="Helical" evidence="1">
    <location>
        <begin position="74"/>
        <end position="96"/>
    </location>
</feature>
<feature type="transmembrane region" description="Helical" evidence="1">
    <location>
        <begin position="106"/>
        <end position="128"/>
    </location>
</feature>
<name>Y523_ARCFU</name>
<evidence type="ECO:0000255" key="1"/>
<evidence type="ECO:0000305" key="2"/>